<sequence length="73" mass="8308">MSLELLSKLETKIQAALETIELLKMELEEEKQKASTLSEHNQQLNAQNQQLQEELTSWNEKVTGLVGLLNSEI</sequence>
<protein>
    <recommendedName>
        <fullName evidence="1">Cell division protein ZapB</fullName>
    </recommendedName>
</protein>
<dbReference type="EMBL" id="CP000563">
    <property type="protein sequence ID" value="ABN63524.1"/>
    <property type="molecule type" value="Genomic_DNA"/>
</dbReference>
<dbReference type="RefSeq" id="WP_006083484.1">
    <property type="nucleotide sequence ID" value="NC_009052.1"/>
</dbReference>
<dbReference type="SMR" id="A3D9W1"/>
<dbReference type="STRING" id="325240.Sbal_4058"/>
<dbReference type="KEGG" id="sbl:Sbal_4058"/>
<dbReference type="HOGENOM" id="CLU_171174_1_0_6"/>
<dbReference type="Proteomes" id="UP000001557">
    <property type="component" value="Chromosome"/>
</dbReference>
<dbReference type="GO" id="GO:0005737">
    <property type="term" value="C:cytoplasm"/>
    <property type="evidence" value="ECO:0007669"/>
    <property type="project" value="UniProtKB-SubCell"/>
</dbReference>
<dbReference type="GO" id="GO:0000917">
    <property type="term" value="P:division septum assembly"/>
    <property type="evidence" value="ECO:0007669"/>
    <property type="project" value="UniProtKB-KW"/>
</dbReference>
<dbReference type="GO" id="GO:0043093">
    <property type="term" value="P:FtsZ-dependent cytokinesis"/>
    <property type="evidence" value="ECO:0007669"/>
    <property type="project" value="UniProtKB-UniRule"/>
</dbReference>
<dbReference type="Gene3D" id="1.20.5.340">
    <property type="match status" value="1"/>
</dbReference>
<dbReference type="HAMAP" id="MF_01196">
    <property type="entry name" value="ZapB"/>
    <property type="match status" value="1"/>
</dbReference>
<dbReference type="InterPro" id="IPR009252">
    <property type="entry name" value="Cell_div_ZapB"/>
</dbReference>
<dbReference type="Pfam" id="PF06005">
    <property type="entry name" value="ZapB"/>
    <property type="match status" value="1"/>
</dbReference>
<evidence type="ECO:0000255" key="1">
    <source>
        <dbReference type="HAMAP-Rule" id="MF_01196"/>
    </source>
</evidence>
<organism>
    <name type="scientific">Shewanella baltica (strain OS155 / ATCC BAA-1091)</name>
    <dbReference type="NCBI Taxonomy" id="325240"/>
    <lineage>
        <taxon>Bacteria</taxon>
        <taxon>Pseudomonadati</taxon>
        <taxon>Pseudomonadota</taxon>
        <taxon>Gammaproteobacteria</taxon>
        <taxon>Alteromonadales</taxon>
        <taxon>Shewanellaceae</taxon>
        <taxon>Shewanella</taxon>
    </lineage>
</organism>
<feature type="chain" id="PRO_0000333922" description="Cell division protein ZapB">
    <location>
        <begin position="1"/>
        <end position="73"/>
    </location>
</feature>
<feature type="coiled-coil region" evidence="1">
    <location>
        <begin position="3"/>
        <end position="66"/>
    </location>
</feature>
<gene>
    <name evidence="1" type="primary">zapB</name>
    <name type="ordered locus">Sbal_4058</name>
</gene>
<keyword id="KW-0131">Cell cycle</keyword>
<keyword id="KW-0132">Cell division</keyword>
<keyword id="KW-0175">Coiled coil</keyword>
<keyword id="KW-0963">Cytoplasm</keyword>
<keyword id="KW-1185">Reference proteome</keyword>
<keyword id="KW-0717">Septation</keyword>
<proteinExistence type="inferred from homology"/>
<name>ZAPB_SHEB5</name>
<accession>A3D9W1</accession>
<comment type="function">
    <text evidence="1">Non-essential, abundant cell division factor that is required for proper Z-ring formation. It is recruited early to the divisome by direct interaction with FtsZ, stimulating Z-ring assembly and thereby promoting cell division earlier in the cell cycle. Its recruitment to the Z-ring requires functional FtsA or ZipA.</text>
</comment>
<comment type="subunit">
    <text evidence="1">Homodimer. The ends of the coiled-coil dimer bind to each other, forming polymers. Interacts with FtsZ.</text>
</comment>
<comment type="subcellular location">
    <subcellularLocation>
        <location>Cytoplasm</location>
    </subcellularLocation>
    <text evidence="1">Localizes to the septum at mid-cell, in a FtsZ-like pattern.</text>
</comment>
<comment type="similarity">
    <text evidence="1">Belongs to the ZapB family.</text>
</comment>
<reference key="1">
    <citation type="submission" date="2007-02" db="EMBL/GenBank/DDBJ databases">
        <title>Complete sequence of chromosome of Shewanella baltica OS155.</title>
        <authorList>
            <consortium name="US DOE Joint Genome Institute"/>
            <person name="Copeland A."/>
            <person name="Lucas S."/>
            <person name="Lapidus A."/>
            <person name="Barry K."/>
            <person name="Detter J.C."/>
            <person name="Glavina del Rio T."/>
            <person name="Hammon N."/>
            <person name="Israni S."/>
            <person name="Dalin E."/>
            <person name="Tice H."/>
            <person name="Pitluck S."/>
            <person name="Sims D.R."/>
            <person name="Brettin T."/>
            <person name="Bruce D."/>
            <person name="Han C."/>
            <person name="Tapia R."/>
            <person name="Brainard J."/>
            <person name="Schmutz J."/>
            <person name="Larimer F."/>
            <person name="Land M."/>
            <person name="Hauser L."/>
            <person name="Kyrpides N."/>
            <person name="Mikhailova N."/>
            <person name="Brettar I."/>
            <person name="Klappenbach J."/>
            <person name="Konstantinidis K."/>
            <person name="Rodrigues J."/>
            <person name="Tiedje J."/>
            <person name="Richardson P."/>
        </authorList>
    </citation>
    <scope>NUCLEOTIDE SEQUENCE [LARGE SCALE GENOMIC DNA]</scope>
    <source>
        <strain>OS155 / ATCC BAA-1091</strain>
    </source>
</reference>